<dbReference type="EMBL" id="AL009126">
    <property type="protein sequence ID" value="CAB13909.1"/>
    <property type="molecule type" value="Genomic_DNA"/>
</dbReference>
<dbReference type="RefSeq" id="NP_389899.1">
    <property type="nucleotide sequence ID" value="NC_000964.3"/>
</dbReference>
<dbReference type="RefSeq" id="WP_009967465.1">
    <property type="nucleotide sequence ID" value="NZ_OZ025638.1"/>
</dbReference>
<dbReference type="FunCoup" id="O31886">
    <property type="interactions" value="84"/>
</dbReference>
<dbReference type="STRING" id="224308.BSU20170"/>
<dbReference type="PaxDb" id="224308-BSU20170"/>
<dbReference type="EnsemblBacteria" id="CAB13909">
    <property type="protein sequence ID" value="CAB13909"/>
    <property type="gene ID" value="BSU_20170"/>
</dbReference>
<dbReference type="GeneID" id="939561"/>
<dbReference type="KEGG" id="bsu:BSU20170"/>
<dbReference type="PATRIC" id="fig|224308.43.peg.2130"/>
<dbReference type="InParanoid" id="O31886"/>
<dbReference type="OrthoDB" id="2895184at2"/>
<dbReference type="BioCyc" id="BSUB:BSU20170-MONOMER"/>
<dbReference type="Proteomes" id="UP000001570">
    <property type="component" value="Chromosome"/>
</dbReference>
<organism>
    <name type="scientific">Bacillus subtilis (strain 168)</name>
    <dbReference type="NCBI Taxonomy" id="224308"/>
    <lineage>
        <taxon>Bacteria</taxon>
        <taxon>Bacillati</taxon>
        <taxon>Bacillota</taxon>
        <taxon>Bacilli</taxon>
        <taxon>Bacillales</taxon>
        <taxon>Bacillaceae</taxon>
        <taxon>Bacillus</taxon>
    </lineage>
</organism>
<accession>O31886</accession>
<proteinExistence type="predicted"/>
<gene>
    <name type="primary">yosC</name>
    <name type="ordered locus">BSU20170</name>
</gene>
<keyword id="KW-1185">Reference proteome</keyword>
<name>YOSC_BACSU</name>
<feature type="chain" id="PRO_0000360048" description="SPbeta prophage-derived uncharacterized protein YosC">
    <location>
        <begin position="1"/>
        <end position="180"/>
    </location>
</feature>
<sequence>MISRASAVYDKLKQAERNIRGDESMQTLDAPIYEVKQESDWYKSEKKRKEDINSFFDKFEEKYGVKEGFSFYHSEYFGVYEGTEAYEIFKNDIVKNQVDGFYAFKKRSKYFKEIKAMIEQIEEVYPFRSHDELGLNNMTGRQWIGDRWFFGVKTEQLVNGDSVVATDYKDYLKIVMEHLD</sequence>
<protein>
    <recommendedName>
        <fullName>SPbeta prophage-derived uncharacterized protein YosC</fullName>
    </recommendedName>
</protein>
<reference key="1">
    <citation type="journal article" date="1997" name="Nature">
        <title>The complete genome sequence of the Gram-positive bacterium Bacillus subtilis.</title>
        <authorList>
            <person name="Kunst F."/>
            <person name="Ogasawara N."/>
            <person name="Moszer I."/>
            <person name="Albertini A.M."/>
            <person name="Alloni G."/>
            <person name="Azevedo V."/>
            <person name="Bertero M.G."/>
            <person name="Bessieres P."/>
            <person name="Bolotin A."/>
            <person name="Borchert S."/>
            <person name="Borriss R."/>
            <person name="Boursier L."/>
            <person name="Brans A."/>
            <person name="Braun M."/>
            <person name="Brignell S.C."/>
            <person name="Bron S."/>
            <person name="Brouillet S."/>
            <person name="Bruschi C.V."/>
            <person name="Caldwell B."/>
            <person name="Capuano V."/>
            <person name="Carter N.M."/>
            <person name="Choi S.-K."/>
            <person name="Codani J.-J."/>
            <person name="Connerton I.F."/>
            <person name="Cummings N.J."/>
            <person name="Daniel R.A."/>
            <person name="Denizot F."/>
            <person name="Devine K.M."/>
            <person name="Duesterhoeft A."/>
            <person name="Ehrlich S.D."/>
            <person name="Emmerson P.T."/>
            <person name="Entian K.-D."/>
            <person name="Errington J."/>
            <person name="Fabret C."/>
            <person name="Ferrari E."/>
            <person name="Foulger D."/>
            <person name="Fritz C."/>
            <person name="Fujita M."/>
            <person name="Fujita Y."/>
            <person name="Fuma S."/>
            <person name="Galizzi A."/>
            <person name="Galleron N."/>
            <person name="Ghim S.-Y."/>
            <person name="Glaser P."/>
            <person name="Goffeau A."/>
            <person name="Golightly E.J."/>
            <person name="Grandi G."/>
            <person name="Guiseppi G."/>
            <person name="Guy B.J."/>
            <person name="Haga K."/>
            <person name="Haiech J."/>
            <person name="Harwood C.R."/>
            <person name="Henaut A."/>
            <person name="Hilbert H."/>
            <person name="Holsappel S."/>
            <person name="Hosono S."/>
            <person name="Hullo M.-F."/>
            <person name="Itaya M."/>
            <person name="Jones L.-M."/>
            <person name="Joris B."/>
            <person name="Karamata D."/>
            <person name="Kasahara Y."/>
            <person name="Klaerr-Blanchard M."/>
            <person name="Klein C."/>
            <person name="Kobayashi Y."/>
            <person name="Koetter P."/>
            <person name="Koningstein G."/>
            <person name="Krogh S."/>
            <person name="Kumano M."/>
            <person name="Kurita K."/>
            <person name="Lapidus A."/>
            <person name="Lardinois S."/>
            <person name="Lauber J."/>
            <person name="Lazarevic V."/>
            <person name="Lee S.-M."/>
            <person name="Levine A."/>
            <person name="Liu H."/>
            <person name="Masuda S."/>
            <person name="Mauel C."/>
            <person name="Medigue C."/>
            <person name="Medina N."/>
            <person name="Mellado R.P."/>
            <person name="Mizuno M."/>
            <person name="Moestl D."/>
            <person name="Nakai S."/>
            <person name="Noback M."/>
            <person name="Noone D."/>
            <person name="O'Reilly M."/>
            <person name="Ogawa K."/>
            <person name="Ogiwara A."/>
            <person name="Oudega B."/>
            <person name="Park S.-H."/>
            <person name="Parro V."/>
            <person name="Pohl T.M."/>
            <person name="Portetelle D."/>
            <person name="Porwollik S."/>
            <person name="Prescott A.M."/>
            <person name="Presecan E."/>
            <person name="Pujic P."/>
            <person name="Purnelle B."/>
            <person name="Rapoport G."/>
            <person name="Rey M."/>
            <person name="Reynolds S."/>
            <person name="Rieger M."/>
            <person name="Rivolta C."/>
            <person name="Rocha E."/>
            <person name="Roche B."/>
            <person name="Rose M."/>
            <person name="Sadaie Y."/>
            <person name="Sato T."/>
            <person name="Scanlan E."/>
            <person name="Schleich S."/>
            <person name="Schroeter R."/>
            <person name="Scoffone F."/>
            <person name="Sekiguchi J."/>
            <person name="Sekowska A."/>
            <person name="Seror S.J."/>
            <person name="Serror P."/>
            <person name="Shin B.-S."/>
            <person name="Soldo B."/>
            <person name="Sorokin A."/>
            <person name="Tacconi E."/>
            <person name="Takagi T."/>
            <person name="Takahashi H."/>
            <person name="Takemaru K."/>
            <person name="Takeuchi M."/>
            <person name="Tamakoshi A."/>
            <person name="Tanaka T."/>
            <person name="Terpstra P."/>
            <person name="Tognoni A."/>
            <person name="Tosato V."/>
            <person name="Uchiyama S."/>
            <person name="Vandenbol M."/>
            <person name="Vannier F."/>
            <person name="Vassarotti A."/>
            <person name="Viari A."/>
            <person name="Wambutt R."/>
            <person name="Wedler E."/>
            <person name="Wedler H."/>
            <person name="Weitzenegger T."/>
            <person name="Winters P."/>
            <person name="Wipat A."/>
            <person name="Yamamoto H."/>
            <person name="Yamane K."/>
            <person name="Yasumoto K."/>
            <person name="Yata K."/>
            <person name="Yoshida K."/>
            <person name="Yoshikawa H.-F."/>
            <person name="Zumstein E."/>
            <person name="Yoshikawa H."/>
            <person name="Danchin A."/>
        </authorList>
    </citation>
    <scope>NUCLEOTIDE SEQUENCE [LARGE SCALE GENOMIC DNA]</scope>
    <source>
        <strain>168</strain>
    </source>
</reference>